<comment type="function">
    <text evidence="3">Dehydrogenase that can use N-acetyl-c-aminobutyraldehyde (NAGABald), gamma-guanidinobutyraldehyde (GGBald), betaine aldehyde (Bet-ald), gamma-aminobutyraldehyde (GAB-ald), acetaldehyde, 4-aminobutylaldehyde (AB-ald), 3-aminopropionaldehyde (AP-ald), 4-N-trimethylaminobutyraldehyde (TMAB-ald) and 3-N-trimethylaminopropionaldehyde (TMAP-ald) as substrates. Catalyzes the oxidation of GAB-ald more efficiently than Bet-ald. Mediates the conversion of GAB-ald into gamma-aminobutyric acid (GABA), and prevents the formation of 2-acetyl-1-pyrroline (2AP) which gives fragrant rice its aromatic properties.</text>
</comment>
<comment type="catalytic activity">
    <reaction>
        <text>betaine aldehyde + NAD(+) + H2O = glycine betaine + NADH + 2 H(+)</text>
        <dbReference type="Rhea" id="RHEA:15305"/>
        <dbReference type="ChEBI" id="CHEBI:15377"/>
        <dbReference type="ChEBI" id="CHEBI:15378"/>
        <dbReference type="ChEBI" id="CHEBI:15710"/>
        <dbReference type="ChEBI" id="CHEBI:17750"/>
        <dbReference type="ChEBI" id="CHEBI:57540"/>
        <dbReference type="ChEBI" id="CHEBI:57945"/>
        <dbReference type="EC" id="1.2.1.8"/>
    </reaction>
</comment>
<comment type="pathway">
    <text>Amine and polyamine biosynthesis; betaine biosynthesis via choline pathway; betaine from betaine aldehyde: step 1/1.</text>
</comment>
<comment type="subunit">
    <text evidence="1">Homodimer.</text>
</comment>
<comment type="subcellular location">
    <subcellularLocation>
        <location evidence="1">Peroxisome</location>
    </subcellularLocation>
    <subcellularLocation>
        <location evidence="1">Cytoplasm</location>
    </subcellularLocation>
</comment>
<comment type="miscellaneous">
    <text evidence="5 6">Present in a truncated form, mostly allele badh2.1, also called 'fgr' in fragrant rice varieties (e.g. basmati and jasmine rice). The loss of activity leads to accumulation of 2-acetyl-1-pyrroline (2AP) that confers the flavor of fragrant rice. Haplotype analysis suggests a single origin of the badh2.1 allele within the Japonica varietal group and demonstrates the introgression of this allele from Japonica to Indica (PubMed:18599581, PubMed:19706531).</text>
</comment>
<comment type="similarity">
    <text evidence="4">Belongs to the aldehyde dehydrogenase family.</text>
</comment>
<name>BADH2_ORYSI</name>
<accession>B3VMC0</accession>
<keyword id="KW-0963">Cytoplasm</keyword>
<keyword id="KW-0520">NAD</keyword>
<keyword id="KW-0560">Oxidoreductase</keyword>
<keyword id="KW-0576">Peroxisome</keyword>
<keyword id="KW-1185">Reference proteome</keyword>
<gene>
    <name type="primary">BADH2</name>
    <name type="ORF">OsI_29289</name>
</gene>
<organism>
    <name type="scientific">Oryza sativa subsp. indica</name>
    <name type="common">Rice</name>
    <dbReference type="NCBI Taxonomy" id="39946"/>
    <lineage>
        <taxon>Eukaryota</taxon>
        <taxon>Viridiplantae</taxon>
        <taxon>Streptophyta</taxon>
        <taxon>Embryophyta</taxon>
        <taxon>Tracheophyta</taxon>
        <taxon>Spermatophyta</taxon>
        <taxon>Magnoliopsida</taxon>
        <taxon>Liliopsida</taxon>
        <taxon>Poales</taxon>
        <taxon>Poaceae</taxon>
        <taxon>BOP clade</taxon>
        <taxon>Oryzoideae</taxon>
        <taxon>Oryzeae</taxon>
        <taxon>Oryzinae</taxon>
        <taxon>Oryza</taxon>
        <taxon>Oryza sativa</taxon>
    </lineage>
</organism>
<feature type="chain" id="PRO_0000430058" description="Betaine aldehyde dehydrogenase 2">
    <location>
        <begin position="1"/>
        <end position="503"/>
    </location>
</feature>
<feature type="short sequence motif" description="Microbody targeting signal" evidence="2">
    <location>
        <begin position="501"/>
        <end position="503"/>
    </location>
</feature>
<feature type="active site" evidence="1">
    <location>
        <position position="260"/>
    </location>
</feature>
<feature type="active site" evidence="1">
    <location>
        <position position="294"/>
    </location>
</feature>
<feature type="binding site" evidence="1">
    <location>
        <begin position="161"/>
        <end position="170"/>
    </location>
    <ligand>
        <name>betaine aldehyde</name>
        <dbReference type="ChEBI" id="CHEBI:15710"/>
    </ligand>
</feature>
<feature type="binding site" evidence="1">
    <location>
        <begin position="238"/>
        <end position="243"/>
    </location>
    <ligand>
        <name>NAD(+)</name>
        <dbReference type="ChEBI" id="CHEBI:57540"/>
    </ligand>
</feature>
<feature type="binding site" evidence="1">
    <location>
        <begin position="260"/>
        <end position="261"/>
    </location>
    <ligand>
        <name>4-aminobutanal</name>
        <dbReference type="ChEBI" id="CHEBI:58264"/>
    </ligand>
</feature>
<feature type="binding site" evidence="1">
    <location>
        <position position="260"/>
    </location>
    <ligand>
        <name>betaine aldehyde</name>
        <dbReference type="ChEBI" id="CHEBI:15710"/>
    </ligand>
</feature>
<feature type="binding site" evidence="1">
    <location>
        <begin position="292"/>
        <end position="295"/>
    </location>
    <ligand>
        <name>betaine aldehyde</name>
        <dbReference type="ChEBI" id="CHEBI:15710"/>
    </ligand>
</feature>
<feature type="binding site" evidence="1">
    <location>
        <position position="294"/>
    </location>
    <ligand>
        <name>4-aminobutanal</name>
        <dbReference type="ChEBI" id="CHEBI:58264"/>
    </ligand>
</feature>
<feature type="binding site" evidence="1">
    <location>
        <position position="453"/>
    </location>
    <ligand>
        <name>betaine aldehyde</name>
        <dbReference type="ChEBI" id="CHEBI:15710"/>
    </ligand>
</feature>
<feature type="binding site" evidence="1">
    <location>
        <position position="459"/>
    </location>
    <ligand>
        <name>4-aminobutanal</name>
        <dbReference type="ChEBI" id="CHEBI:58264"/>
    </ligand>
</feature>
<dbReference type="EC" id="1.2.1.8"/>
<dbReference type="EMBL" id="EU770319">
    <property type="protein sequence ID" value="ACF06146.1"/>
    <property type="molecule type" value="Genomic_DNA"/>
</dbReference>
<dbReference type="EMBL" id="EU770322">
    <property type="protein sequence ID" value="ACF06149.1"/>
    <property type="molecule type" value="mRNA"/>
</dbReference>
<dbReference type="EMBL" id="CM000133">
    <property type="protein sequence ID" value="EEC83602.1"/>
    <property type="molecule type" value="Genomic_DNA"/>
</dbReference>
<dbReference type="SMR" id="B3VMC0"/>
<dbReference type="STRING" id="39946.B3VMC0"/>
<dbReference type="EnsemblPlants" id="BGIOSGA028697-TA">
    <property type="protein sequence ID" value="BGIOSGA028697-PA"/>
    <property type="gene ID" value="BGIOSGA028697"/>
</dbReference>
<dbReference type="EnsemblPlants" id="OsGoSa_08g0015860.01">
    <property type="protein sequence ID" value="OsGoSa_08g0015860.01"/>
    <property type="gene ID" value="OsGoSa_08g0015860"/>
</dbReference>
<dbReference type="EnsemblPlants" id="OsIR64_08g0016420.01">
    <property type="protein sequence ID" value="OsIR64_08g0016420.01"/>
    <property type="gene ID" value="OsIR64_08g0016420"/>
</dbReference>
<dbReference type="EnsemblPlants" id="OsKYG_08g0016070.01">
    <property type="protein sequence ID" value="OsKYG_08g0016070.01"/>
    <property type="gene ID" value="OsKYG_08g0016070"/>
</dbReference>
<dbReference type="EnsemblPlants" id="OsLaMu_08g0016080.01">
    <property type="protein sequence ID" value="OsLaMu_08g0016080.01"/>
    <property type="gene ID" value="OsLaMu_08g0016080"/>
</dbReference>
<dbReference type="EnsemblPlants" id="OsLima_08g0015790.01">
    <property type="protein sequence ID" value="OsLima_08g0015790.01"/>
    <property type="gene ID" value="OsLima_08g0015790"/>
</dbReference>
<dbReference type="EnsemblPlants" id="OsLiXu_Ung0045830.01">
    <property type="protein sequence ID" value="OsLiXu_Ung0045830.01"/>
    <property type="gene ID" value="OsLiXu_Ung0045830"/>
</dbReference>
<dbReference type="EnsemblPlants" id="OsMH63_08G016530_01">
    <property type="protein sequence ID" value="OsMH63_08G016530_01"/>
    <property type="gene ID" value="OsMH63_08G016530"/>
</dbReference>
<dbReference type="EnsemblPlants" id="OsPr106_08g0016520.01">
    <property type="protein sequence ID" value="OsPr106_08g0016520.01"/>
    <property type="gene ID" value="OsPr106_08g0016520"/>
</dbReference>
<dbReference type="EnsemblPlants" id="OsZS97_08G016500_01">
    <property type="protein sequence ID" value="OsZS97_08G016500_01"/>
    <property type="gene ID" value="OsZS97_08G016500"/>
</dbReference>
<dbReference type="Gramene" id="BGIOSGA028697-TA">
    <property type="protein sequence ID" value="BGIOSGA028697-PA"/>
    <property type="gene ID" value="BGIOSGA028697"/>
</dbReference>
<dbReference type="Gramene" id="OsGoSa_08g0015860.01">
    <property type="protein sequence ID" value="OsGoSa_08g0015860.01"/>
    <property type="gene ID" value="OsGoSa_08g0015860"/>
</dbReference>
<dbReference type="Gramene" id="OsIR64_08g0016420.01">
    <property type="protein sequence ID" value="OsIR64_08g0016420.01"/>
    <property type="gene ID" value="OsIR64_08g0016420"/>
</dbReference>
<dbReference type="Gramene" id="OsKYG_08g0016070.01">
    <property type="protein sequence ID" value="OsKYG_08g0016070.01"/>
    <property type="gene ID" value="OsKYG_08g0016070"/>
</dbReference>
<dbReference type="Gramene" id="OsLaMu_08g0016080.01">
    <property type="protein sequence ID" value="OsLaMu_08g0016080.01"/>
    <property type="gene ID" value="OsLaMu_08g0016080"/>
</dbReference>
<dbReference type="Gramene" id="OsLima_08g0015790.01">
    <property type="protein sequence ID" value="OsLima_08g0015790.01"/>
    <property type="gene ID" value="OsLima_08g0015790"/>
</dbReference>
<dbReference type="Gramene" id="OsLiXu_Ung0045830.01">
    <property type="protein sequence ID" value="OsLiXu_Ung0045830.01"/>
    <property type="gene ID" value="OsLiXu_Ung0045830"/>
</dbReference>
<dbReference type="Gramene" id="OsMH63_08G016530_01">
    <property type="protein sequence ID" value="OsMH63_08G016530_01"/>
    <property type="gene ID" value="OsMH63_08G016530"/>
</dbReference>
<dbReference type="Gramene" id="OsPr106_08g0016520.01">
    <property type="protein sequence ID" value="OsPr106_08g0016520.01"/>
    <property type="gene ID" value="OsPr106_08g0016520"/>
</dbReference>
<dbReference type="Gramene" id="OsZS97_08G016500_01">
    <property type="protein sequence ID" value="OsZS97_08G016500_01"/>
    <property type="gene ID" value="OsZS97_08G016500"/>
</dbReference>
<dbReference type="HOGENOM" id="CLU_005391_0_1_1"/>
<dbReference type="OMA" id="PMPIAAW"/>
<dbReference type="OrthoDB" id="310895at2759"/>
<dbReference type="BRENDA" id="1.2.1.8">
    <property type="organism ID" value="4460"/>
</dbReference>
<dbReference type="UniPathway" id="UPA00529">
    <property type="reaction ID" value="UER00386"/>
</dbReference>
<dbReference type="Proteomes" id="UP000007015">
    <property type="component" value="Chromosome 8"/>
</dbReference>
<dbReference type="GO" id="GO:0005737">
    <property type="term" value="C:cytoplasm"/>
    <property type="evidence" value="ECO:0000250"/>
    <property type="project" value="UniProtKB"/>
</dbReference>
<dbReference type="GO" id="GO:0005777">
    <property type="term" value="C:peroxisome"/>
    <property type="evidence" value="ECO:0000250"/>
    <property type="project" value="UniProtKB"/>
</dbReference>
<dbReference type="GO" id="GO:0008802">
    <property type="term" value="F:betaine-aldehyde dehydrogenase (NAD+) activity"/>
    <property type="evidence" value="ECO:0000250"/>
    <property type="project" value="UniProtKB"/>
</dbReference>
<dbReference type="GO" id="GO:0071454">
    <property type="term" value="P:cellular response to anoxia"/>
    <property type="evidence" value="ECO:0000250"/>
    <property type="project" value="UniProtKB"/>
</dbReference>
<dbReference type="GO" id="GO:0019285">
    <property type="term" value="P:glycine betaine biosynthetic process from choline"/>
    <property type="evidence" value="ECO:0007669"/>
    <property type="project" value="UniProtKB-UniPathway"/>
</dbReference>
<dbReference type="CDD" id="cd07110">
    <property type="entry name" value="ALDH_F10_BADH"/>
    <property type="match status" value="1"/>
</dbReference>
<dbReference type="FunFam" id="3.40.309.10:FF:000012">
    <property type="entry name" value="Betaine aldehyde dehydrogenase"/>
    <property type="match status" value="1"/>
</dbReference>
<dbReference type="FunFam" id="3.40.605.10:FF:000007">
    <property type="entry name" value="NAD/NADP-dependent betaine aldehyde dehydrogenase"/>
    <property type="match status" value="1"/>
</dbReference>
<dbReference type="Gene3D" id="3.40.605.10">
    <property type="entry name" value="Aldehyde Dehydrogenase, Chain A, domain 1"/>
    <property type="match status" value="1"/>
</dbReference>
<dbReference type="Gene3D" id="3.40.309.10">
    <property type="entry name" value="Aldehyde Dehydrogenase, Chain A, domain 2"/>
    <property type="match status" value="1"/>
</dbReference>
<dbReference type="InterPro" id="IPR016161">
    <property type="entry name" value="Ald_DH/histidinol_DH"/>
</dbReference>
<dbReference type="InterPro" id="IPR016163">
    <property type="entry name" value="Ald_DH_C"/>
</dbReference>
<dbReference type="InterPro" id="IPR016160">
    <property type="entry name" value="Ald_DH_CS_CYS"/>
</dbReference>
<dbReference type="InterPro" id="IPR029510">
    <property type="entry name" value="Ald_DH_CS_GLU"/>
</dbReference>
<dbReference type="InterPro" id="IPR016162">
    <property type="entry name" value="Ald_DH_N"/>
</dbReference>
<dbReference type="InterPro" id="IPR015590">
    <property type="entry name" value="Aldehyde_DH_dom"/>
</dbReference>
<dbReference type="PANTHER" id="PTHR43860">
    <property type="entry name" value="BETAINE ALDEHYDE DEHYDROGENASE"/>
    <property type="match status" value="1"/>
</dbReference>
<dbReference type="PANTHER" id="PTHR43860:SF2">
    <property type="entry name" value="BETAINE ALDEHYDE DEHYDROGENASE-RELATED"/>
    <property type="match status" value="1"/>
</dbReference>
<dbReference type="Pfam" id="PF00171">
    <property type="entry name" value="Aldedh"/>
    <property type="match status" value="1"/>
</dbReference>
<dbReference type="SUPFAM" id="SSF53720">
    <property type="entry name" value="ALDH-like"/>
    <property type="match status" value="1"/>
</dbReference>
<dbReference type="PROSITE" id="PS00070">
    <property type="entry name" value="ALDEHYDE_DEHYDR_CYS"/>
    <property type="match status" value="1"/>
</dbReference>
<dbReference type="PROSITE" id="PS00687">
    <property type="entry name" value="ALDEHYDE_DEHYDR_GLU"/>
    <property type="match status" value="1"/>
</dbReference>
<protein>
    <recommendedName>
        <fullName>Betaine aldehyde dehydrogenase 2</fullName>
        <shortName>BADH 2</shortName>
        <ecNumber>1.2.1.8</ecNumber>
    </recommendedName>
</protein>
<proteinExistence type="evidence at transcript level"/>
<evidence type="ECO:0000250" key="1"/>
<evidence type="ECO:0000255" key="2"/>
<evidence type="ECO:0000269" key="3">
    <source>
    </source>
</evidence>
<evidence type="ECO:0000305" key="4"/>
<evidence type="ECO:0000305" key="5">
    <source>
    </source>
</evidence>
<evidence type="ECO:0000305" key="6">
    <source>
    </source>
</evidence>
<sequence length="503" mass="54683">MATAIPQRQLFVAGEWRAPALGRRLPVVNPATESPIGEIPAGTAEDVDAAVAAAREALKRNRGRDWARAPGAVRAKYLRAIAAKIIERKSELARLETLDCGKPLDEAAWDMDDVAGCFEYFADLAESLDKRQNAPVSLPMENFKCYLRKEPIGVVGLITPWNYPLLMATWKVAPALAAGCTAVLKPSELASVTCLELADVCKEVGLPSGVLNIVTGLGSEAGAPLSSHPGVDKVAFTGSYETGKKIMASAAPMVKPVSLELGGKSPIVVFDDVDVEKAVEWTLFGCFWTNGQICSATSRLILHKKIAKEFQERMVAWAKNIKVSDPLEEGCRLGPVVSEGQYEKIKQFVSTAKSQGATILTGGVRPKHLEKGFYIEPTIITDVDTSMQIWREEVFGPVLCVKEFSTEEEAIELANDTHYGLAGAVLSGDRERCQRLTEEIDAGIIWVNCSQPCFCQAPWGGNKRSGFGRELGEGGIDNYLSVKQVTEYASDEPWGWYKSPSKL</sequence>
<reference key="1">
    <citation type="journal article" date="2008" name="Plant Cell">
        <title>Badh2, encoding betaine aldehyde dehydrogenase, inhibits the biosynthesis of 2-acetyl-1-pyrroline, a major component in rice fragrance.</title>
        <authorList>
            <person name="Chen S."/>
            <person name="Yang Y."/>
            <person name="Shi W."/>
            <person name="Ji Q."/>
            <person name="He F."/>
            <person name="Zhang Z."/>
            <person name="Cheng Z."/>
            <person name="Liu X."/>
            <person name="Xu M."/>
        </authorList>
    </citation>
    <scope>NUCLEOTIDE SEQUENCE [GENOMIC DNA / MRNA]</scope>
    <scope>FUNCTION</scope>
    <scope>ROLE IN RICE FRAGRANCE</scope>
    <source>
        <strain>cv. Nanjing 11</strain>
    </source>
</reference>
<reference key="2">
    <citation type="journal article" date="2005" name="PLoS Biol.">
        <title>The genomes of Oryza sativa: a history of duplications.</title>
        <authorList>
            <person name="Yu J."/>
            <person name="Wang J."/>
            <person name="Lin W."/>
            <person name="Li S."/>
            <person name="Li H."/>
            <person name="Zhou J."/>
            <person name="Ni P."/>
            <person name="Dong W."/>
            <person name="Hu S."/>
            <person name="Zeng C."/>
            <person name="Zhang J."/>
            <person name="Zhang Y."/>
            <person name="Li R."/>
            <person name="Xu Z."/>
            <person name="Li S."/>
            <person name="Li X."/>
            <person name="Zheng H."/>
            <person name="Cong L."/>
            <person name="Lin L."/>
            <person name="Yin J."/>
            <person name="Geng J."/>
            <person name="Li G."/>
            <person name="Shi J."/>
            <person name="Liu J."/>
            <person name="Lv H."/>
            <person name="Li J."/>
            <person name="Wang J."/>
            <person name="Deng Y."/>
            <person name="Ran L."/>
            <person name="Shi X."/>
            <person name="Wang X."/>
            <person name="Wu Q."/>
            <person name="Li C."/>
            <person name="Ren X."/>
            <person name="Wang J."/>
            <person name="Wang X."/>
            <person name="Li D."/>
            <person name="Liu D."/>
            <person name="Zhang X."/>
            <person name="Ji Z."/>
            <person name="Zhao W."/>
            <person name="Sun Y."/>
            <person name="Zhang Z."/>
            <person name="Bao J."/>
            <person name="Han Y."/>
            <person name="Dong L."/>
            <person name="Ji J."/>
            <person name="Chen P."/>
            <person name="Wu S."/>
            <person name="Liu J."/>
            <person name="Xiao Y."/>
            <person name="Bu D."/>
            <person name="Tan J."/>
            <person name="Yang L."/>
            <person name="Ye C."/>
            <person name="Zhang J."/>
            <person name="Xu J."/>
            <person name="Zhou Y."/>
            <person name="Yu Y."/>
            <person name="Zhang B."/>
            <person name="Zhuang S."/>
            <person name="Wei H."/>
            <person name="Liu B."/>
            <person name="Lei M."/>
            <person name="Yu H."/>
            <person name="Li Y."/>
            <person name="Xu H."/>
            <person name="Wei S."/>
            <person name="He X."/>
            <person name="Fang L."/>
            <person name="Zhang Z."/>
            <person name="Zhang Y."/>
            <person name="Huang X."/>
            <person name="Su Z."/>
            <person name="Tong W."/>
            <person name="Li J."/>
            <person name="Tong Z."/>
            <person name="Li S."/>
            <person name="Ye J."/>
            <person name="Wang L."/>
            <person name="Fang L."/>
            <person name="Lei T."/>
            <person name="Chen C.-S."/>
            <person name="Chen H.-C."/>
            <person name="Xu Z."/>
            <person name="Li H."/>
            <person name="Huang H."/>
            <person name="Zhang F."/>
            <person name="Xu H."/>
            <person name="Li N."/>
            <person name="Zhao C."/>
            <person name="Li S."/>
            <person name="Dong L."/>
            <person name="Huang Y."/>
            <person name="Li L."/>
            <person name="Xi Y."/>
            <person name="Qi Q."/>
            <person name="Li W."/>
            <person name="Zhang B."/>
            <person name="Hu W."/>
            <person name="Zhang Y."/>
            <person name="Tian X."/>
            <person name="Jiao Y."/>
            <person name="Liang X."/>
            <person name="Jin J."/>
            <person name="Gao L."/>
            <person name="Zheng W."/>
            <person name="Hao B."/>
            <person name="Liu S.-M."/>
            <person name="Wang W."/>
            <person name="Yuan L."/>
            <person name="Cao M."/>
            <person name="McDermott J."/>
            <person name="Samudrala R."/>
            <person name="Wang J."/>
            <person name="Wong G.K.-S."/>
            <person name="Yang H."/>
        </authorList>
    </citation>
    <scope>NUCLEOTIDE SEQUENCE [LARGE SCALE GENOMIC DNA]</scope>
    <source>
        <strain>cv. 93-11</strain>
    </source>
</reference>
<reference key="3">
    <citation type="journal article" date="2009" name="Proc. Natl. Acad. Sci. U.S.A.">
        <title>The origin and evolution of fragrance in rice (Oryza sativa L.).</title>
        <authorList>
            <person name="Kovach M.J."/>
            <person name="Calingacion M.N."/>
            <person name="Fitzgerald M.A."/>
            <person name="McCouch S.R."/>
        </authorList>
    </citation>
    <scope>ROLE IN RICE FRAGRANCE</scope>
</reference>